<protein>
    <recommendedName>
        <fullName>Auxin-responsive protein IAA20</fullName>
    </recommendedName>
    <alternativeName>
        <fullName>Indoleacetic acid-induced protein 20</fullName>
    </alternativeName>
</protein>
<comment type="function">
    <text evidence="1">Aux/IAA proteins are short-lived transcriptional factors that function as repressors of early auxin response genes at low auxin concentrations.</text>
</comment>
<comment type="subunit">
    <text evidence="1">Homodimers and heterodimers.</text>
</comment>
<comment type="subcellular location">
    <subcellularLocation>
        <location evidence="1">Nucleus</location>
    </subcellularLocation>
</comment>
<comment type="tissue specificity">
    <text evidence="4">Expressed at very low levels in etiolated seedlings and flowers.</text>
</comment>
<comment type="induction">
    <text evidence="4">Highly induced by auxin.</text>
</comment>
<comment type="similarity">
    <text evidence="5">Belongs to the Aux/IAA family.</text>
</comment>
<evidence type="ECO:0000250" key="1"/>
<evidence type="ECO:0000255" key="2">
    <source>
        <dbReference type="PROSITE-ProRule" id="PRU01081"/>
    </source>
</evidence>
<evidence type="ECO:0000256" key="3">
    <source>
        <dbReference type="SAM" id="MobiDB-lite"/>
    </source>
</evidence>
<evidence type="ECO:0000269" key="4">
    <source>
    </source>
</evidence>
<evidence type="ECO:0000305" key="5"/>
<evidence type="ECO:0000312" key="6">
    <source>
        <dbReference type="EMBL" id="EAZ35952.1"/>
    </source>
</evidence>
<name>IAA20_ORYSJ</name>
<accession>Q5VRR0</accession>
<accession>A3B8R3</accession>
<accession>Q0DE94</accession>
<gene>
    <name type="primary">IAA20</name>
    <name type="ordered locus">Os06g0166500</name>
    <name type="ordered locus">LOC_Os06g07040</name>
    <name evidence="6" type="ORF">OsJ_20255</name>
    <name type="ORF">OSJNBa0015I14.39</name>
    <name type="ORF">P0680A03.13</name>
</gene>
<organism>
    <name type="scientific">Oryza sativa subsp. japonica</name>
    <name type="common">Rice</name>
    <dbReference type="NCBI Taxonomy" id="39947"/>
    <lineage>
        <taxon>Eukaryota</taxon>
        <taxon>Viridiplantae</taxon>
        <taxon>Streptophyta</taxon>
        <taxon>Embryophyta</taxon>
        <taxon>Tracheophyta</taxon>
        <taxon>Spermatophyta</taxon>
        <taxon>Magnoliopsida</taxon>
        <taxon>Liliopsida</taxon>
        <taxon>Poales</taxon>
        <taxon>Poaceae</taxon>
        <taxon>BOP clade</taxon>
        <taxon>Oryzoideae</taxon>
        <taxon>Oryzeae</taxon>
        <taxon>Oryzinae</taxon>
        <taxon>Oryza</taxon>
        <taxon>Oryza sativa</taxon>
    </lineage>
</organism>
<keyword id="KW-0927">Auxin signaling pathway</keyword>
<keyword id="KW-0539">Nucleus</keyword>
<keyword id="KW-1185">Reference proteome</keyword>
<keyword id="KW-0678">Repressor</keyword>
<keyword id="KW-0804">Transcription</keyword>
<keyword id="KW-0805">Transcription regulation</keyword>
<reference key="1">
    <citation type="journal article" date="2005" name="Nature">
        <title>The map-based sequence of the rice genome.</title>
        <authorList>
            <consortium name="International rice genome sequencing project (IRGSP)"/>
        </authorList>
    </citation>
    <scope>NUCLEOTIDE SEQUENCE [LARGE SCALE GENOMIC DNA]</scope>
    <source>
        <strain>cv. Nipponbare</strain>
    </source>
</reference>
<reference key="2">
    <citation type="journal article" date="2008" name="Nucleic Acids Res.">
        <title>The rice annotation project database (RAP-DB): 2008 update.</title>
        <authorList>
            <consortium name="The rice annotation project (RAP)"/>
        </authorList>
    </citation>
    <scope>GENOME REANNOTATION</scope>
    <source>
        <strain>cv. Nipponbare</strain>
    </source>
</reference>
<reference key="3">
    <citation type="journal article" date="2013" name="Rice">
        <title>Improvement of the Oryza sativa Nipponbare reference genome using next generation sequence and optical map data.</title>
        <authorList>
            <person name="Kawahara Y."/>
            <person name="de la Bastide M."/>
            <person name="Hamilton J.P."/>
            <person name="Kanamori H."/>
            <person name="McCombie W.R."/>
            <person name="Ouyang S."/>
            <person name="Schwartz D.C."/>
            <person name="Tanaka T."/>
            <person name="Wu J."/>
            <person name="Zhou S."/>
            <person name="Childs K.L."/>
            <person name="Davidson R.M."/>
            <person name="Lin H."/>
            <person name="Quesada-Ocampo L."/>
            <person name="Vaillancourt B."/>
            <person name="Sakai H."/>
            <person name="Lee S.S."/>
            <person name="Kim J."/>
            <person name="Numa H."/>
            <person name="Itoh T."/>
            <person name="Buell C.R."/>
            <person name="Matsumoto T."/>
        </authorList>
    </citation>
    <scope>GENOME REANNOTATION</scope>
    <source>
        <strain>cv. Nipponbare</strain>
    </source>
</reference>
<reference key="4">
    <citation type="journal article" date="2005" name="PLoS Biol.">
        <title>The genomes of Oryza sativa: a history of duplications.</title>
        <authorList>
            <person name="Yu J."/>
            <person name="Wang J."/>
            <person name="Lin W."/>
            <person name="Li S."/>
            <person name="Li H."/>
            <person name="Zhou J."/>
            <person name="Ni P."/>
            <person name="Dong W."/>
            <person name="Hu S."/>
            <person name="Zeng C."/>
            <person name="Zhang J."/>
            <person name="Zhang Y."/>
            <person name="Li R."/>
            <person name="Xu Z."/>
            <person name="Li S."/>
            <person name="Li X."/>
            <person name="Zheng H."/>
            <person name="Cong L."/>
            <person name="Lin L."/>
            <person name="Yin J."/>
            <person name="Geng J."/>
            <person name="Li G."/>
            <person name="Shi J."/>
            <person name="Liu J."/>
            <person name="Lv H."/>
            <person name="Li J."/>
            <person name="Wang J."/>
            <person name="Deng Y."/>
            <person name="Ran L."/>
            <person name="Shi X."/>
            <person name="Wang X."/>
            <person name="Wu Q."/>
            <person name="Li C."/>
            <person name="Ren X."/>
            <person name="Wang J."/>
            <person name="Wang X."/>
            <person name="Li D."/>
            <person name="Liu D."/>
            <person name="Zhang X."/>
            <person name="Ji Z."/>
            <person name="Zhao W."/>
            <person name="Sun Y."/>
            <person name="Zhang Z."/>
            <person name="Bao J."/>
            <person name="Han Y."/>
            <person name="Dong L."/>
            <person name="Ji J."/>
            <person name="Chen P."/>
            <person name="Wu S."/>
            <person name="Liu J."/>
            <person name="Xiao Y."/>
            <person name="Bu D."/>
            <person name="Tan J."/>
            <person name="Yang L."/>
            <person name="Ye C."/>
            <person name="Zhang J."/>
            <person name="Xu J."/>
            <person name="Zhou Y."/>
            <person name="Yu Y."/>
            <person name="Zhang B."/>
            <person name="Zhuang S."/>
            <person name="Wei H."/>
            <person name="Liu B."/>
            <person name="Lei M."/>
            <person name="Yu H."/>
            <person name="Li Y."/>
            <person name="Xu H."/>
            <person name="Wei S."/>
            <person name="He X."/>
            <person name="Fang L."/>
            <person name="Zhang Z."/>
            <person name="Zhang Y."/>
            <person name="Huang X."/>
            <person name="Su Z."/>
            <person name="Tong W."/>
            <person name="Li J."/>
            <person name="Tong Z."/>
            <person name="Li S."/>
            <person name="Ye J."/>
            <person name="Wang L."/>
            <person name="Fang L."/>
            <person name="Lei T."/>
            <person name="Chen C.-S."/>
            <person name="Chen H.-C."/>
            <person name="Xu Z."/>
            <person name="Li H."/>
            <person name="Huang H."/>
            <person name="Zhang F."/>
            <person name="Xu H."/>
            <person name="Li N."/>
            <person name="Zhao C."/>
            <person name="Li S."/>
            <person name="Dong L."/>
            <person name="Huang Y."/>
            <person name="Li L."/>
            <person name="Xi Y."/>
            <person name="Qi Q."/>
            <person name="Li W."/>
            <person name="Zhang B."/>
            <person name="Hu W."/>
            <person name="Zhang Y."/>
            <person name="Tian X."/>
            <person name="Jiao Y."/>
            <person name="Liang X."/>
            <person name="Jin J."/>
            <person name="Gao L."/>
            <person name="Zheng W."/>
            <person name="Hao B."/>
            <person name="Liu S.-M."/>
            <person name="Wang W."/>
            <person name="Yuan L."/>
            <person name="Cao M."/>
            <person name="McDermott J."/>
            <person name="Samudrala R."/>
            <person name="Wang J."/>
            <person name="Wong G.K.-S."/>
            <person name="Yang H."/>
        </authorList>
    </citation>
    <scope>NUCLEOTIDE SEQUENCE [LARGE SCALE GENOMIC DNA]</scope>
    <source>
        <strain>cv. Nipponbare</strain>
    </source>
</reference>
<reference key="5">
    <citation type="journal article" date="2003" name="Science">
        <title>Collection, mapping, and annotation of over 28,000 cDNA clones from japonica rice.</title>
        <authorList>
            <consortium name="The rice full-length cDNA consortium"/>
        </authorList>
    </citation>
    <scope>NUCLEOTIDE SEQUENCE [LARGE SCALE MRNA]</scope>
    <source>
        <strain>cv. Nipponbare</strain>
    </source>
</reference>
<reference key="6">
    <citation type="journal article" date="2006" name="Funct. Integr. Genomics">
        <title>Structure and expression analysis of early auxin-responsive Aux/IAA gene family in rice (Oryza sativa).</title>
        <authorList>
            <person name="Jain M."/>
            <person name="Kaur N."/>
            <person name="Garg R."/>
            <person name="Thakur J.K."/>
            <person name="Tyagi A.K."/>
            <person name="Khurana J.P."/>
        </authorList>
    </citation>
    <scope>TISSUE SPECIFICITY</scope>
    <scope>INDUCTION</scope>
    <scope>NOMENCLATURE</scope>
</reference>
<dbReference type="EMBL" id="AB023482">
    <property type="protein sequence ID" value="BAD67602.1"/>
    <property type="molecule type" value="Genomic_DNA"/>
</dbReference>
<dbReference type="EMBL" id="AP002536">
    <property type="protein sequence ID" value="BAD67865.1"/>
    <property type="molecule type" value="Genomic_DNA"/>
</dbReference>
<dbReference type="EMBL" id="AP008212">
    <property type="protein sequence ID" value="BAF18829.2"/>
    <property type="molecule type" value="Genomic_DNA"/>
</dbReference>
<dbReference type="EMBL" id="AP014962">
    <property type="protein sequence ID" value="BAS96336.1"/>
    <property type="molecule type" value="Genomic_DNA"/>
</dbReference>
<dbReference type="EMBL" id="CM000143">
    <property type="protein sequence ID" value="EAZ35952.1"/>
    <property type="molecule type" value="Genomic_DNA"/>
</dbReference>
<dbReference type="EMBL" id="AK102541">
    <property type="protein sequence ID" value="BAG95607.1"/>
    <property type="molecule type" value="mRNA"/>
</dbReference>
<dbReference type="RefSeq" id="XP_015641983.1">
    <property type="nucleotide sequence ID" value="XM_015786497.1"/>
</dbReference>
<dbReference type="SMR" id="Q5VRR0"/>
<dbReference type="STRING" id="39947.Q5VRR0"/>
<dbReference type="PaxDb" id="39947-Q5VRR0"/>
<dbReference type="EnsemblPlants" id="Os06t0166500-01">
    <property type="protein sequence ID" value="Os06t0166500-01"/>
    <property type="gene ID" value="Os06g0166500"/>
</dbReference>
<dbReference type="Gramene" id="Os06t0166500-01">
    <property type="protein sequence ID" value="Os06t0166500-01"/>
    <property type="gene ID" value="Os06g0166500"/>
</dbReference>
<dbReference type="KEGG" id="dosa:Os06g0166500"/>
<dbReference type="eggNOG" id="ENOG502S1G8">
    <property type="taxonomic scope" value="Eukaryota"/>
</dbReference>
<dbReference type="HOGENOM" id="CLU_049393_4_1_1"/>
<dbReference type="InParanoid" id="Q5VRR0"/>
<dbReference type="OMA" id="TNQEDGH"/>
<dbReference type="OrthoDB" id="652411at2759"/>
<dbReference type="PlantReactome" id="R-OSA-5608118">
    <property type="pathway name" value="Auxin signalling"/>
</dbReference>
<dbReference type="Proteomes" id="UP000000763">
    <property type="component" value="Chromosome 6"/>
</dbReference>
<dbReference type="Proteomes" id="UP000007752">
    <property type="component" value="Chromosome 6"/>
</dbReference>
<dbReference type="Proteomes" id="UP000059680">
    <property type="component" value="Chromosome 6"/>
</dbReference>
<dbReference type="GO" id="GO:0005634">
    <property type="term" value="C:nucleus"/>
    <property type="evidence" value="ECO:0007669"/>
    <property type="project" value="UniProtKB-SubCell"/>
</dbReference>
<dbReference type="GO" id="GO:0009734">
    <property type="term" value="P:auxin-activated signaling pathway"/>
    <property type="evidence" value="ECO:0007669"/>
    <property type="project" value="UniProtKB-KW"/>
</dbReference>
<dbReference type="GO" id="GO:0006355">
    <property type="term" value="P:regulation of DNA-templated transcription"/>
    <property type="evidence" value="ECO:0007669"/>
    <property type="project" value="InterPro"/>
</dbReference>
<dbReference type="GO" id="GO:0009733">
    <property type="term" value="P:response to auxin"/>
    <property type="evidence" value="ECO:0000305"/>
    <property type="project" value="Gramene"/>
</dbReference>
<dbReference type="Gene3D" id="3.10.20.90">
    <property type="entry name" value="Phosphatidylinositol 3-kinase Catalytic Subunit, Chain A, domain 1"/>
    <property type="match status" value="1"/>
</dbReference>
<dbReference type="InterPro" id="IPR033389">
    <property type="entry name" value="AUX/IAA_dom"/>
</dbReference>
<dbReference type="InterPro" id="IPR003311">
    <property type="entry name" value="AUX_IAA"/>
</dbReference>
<dbReference type="InterPro" id="IPR053793">
    <property type="entry name" value="PB1-like"/>
</dbReference>
<dbReference type="PANTHER" id="PTHR31734">
    <property type="entry name" value="AUXIN-RESPONSIVE PROTEIN IAA17"/>
    <property type="match status" value="1"/>
</dbReference>
<dbReference type="PANTHER" id="PTHR31734:SF38">
    <property type="entry name" value="AUXIN-RESPONSIVE PROTEIN IAA29"/>
    <property type="match status" value="1"/>
</dbReference>
<dbReference type="Pfam" id="PF02309">
    <property type="entry name" value="AUX_IAA"/>
    <property type="match status" value="1"/>
</dbReference>
<dbReference type="SUPFAM" id="SSF54277">
    <property type="entry name" value="CAD &amp; PB1 domains"/>
    <property type="match status" value="1"/>
</dbReference>
<dbReference type="PROSITE" id="PS51745">
    <property type="entry name" value="PB1"/>
    <property type="match status" value="1"/>
</dbReference>
<proteinExistence type="evidence at transcript level"/>
<feature type="chain" id="PRO_0000223219" description="Auxin-responsive protein IAA20">
    <location>
        <begin position="1"/>
        <end position="183"/>
    </location>
</feature>
<feature type="domain" description="PB1" evidence="2">
    <location>
        <begin position="98"/>
        <end position="183"/>
    </location>
</feature>
<feature type="region of interest" description="Disordered" evidence="3">
    <location>
        <begin position="1"/>
        <end position="23"/>
    </location>
</feature>
<feature type="region of interest" description="Disordered" evidence="3">
    <location>
        <begin position="42"/>
        <end position="77"/>
    </location>
</feature>
<feature type="short sequence motif" description="EAR-like (transcriptional repression)" evidence="1">
    <location>
        <begin position="3"/>
        <end position="7"/>
    </location>
</feature>
<sequence>MELELGLRLALPSPSPSPATATAAGSELDLLNSAPGSCRKRGFEEALGGFKTDDDNDDGNGRGGDGDSDGEMGNKRRKLVGWPPVKCLHRRRDGGCGGGYVKVKMEGLAIGRKLDLSILGSYAELLDTLHLMFPSTNQEDGHDRRRRHPYAVTYEDGEGDWMQVGDVPWEAFAKSVKRLKILV</sequence>